<name>YFIA_HAEIN</name>
<reference key="1">
    <citation type="journal article" date="1995" name="Science">
        <title>Whole-genome random sequencing and assembly of Haemophilus influenzae Rd.</title>
        <authorList>
            <person name="Fleischmann R.D."/>
            <person name="Adams M.D."/>
            <person name="White O."/>
            <person name="Clayton R.A."/>
            <person name="Kirkness E.F."/>
            <person name="Kerlavage A.R."/>
            <person name="Bult C.J."/>
            <person name="Tomb J.-F."/>
            <person name="Dougherty B.A."/>
            <person name="Merrick J.M."/>
            <person name="McKenney K."/>
            <person name="Sutton G.G."/>
            <person name="FitzHugh W."/>
            <person name="Fields C.A."/>
            <person name="Gocayne J.D."/>
            <person name="Scott J.D."/>
            <person name="Shirley R."/>
            <person name="Liu L.-I."/>
            <person name="Glodek A."/>
            <person name="Kelley J.M."/>
            <person name="Weidman J.F."/>
            <person name="Phillips C.A."/>
            <person name="Spriggs T."/>
            <person name="Hedblom E."/>
            <person name="Cotton M.D."/>
            <person name="Utterback T.R."/>
            <person name="Hanna M.C."/>
            <person name="Nguyen D.T."/>
            <person name="Saudek D.M."/>
            <person name="Brandon R.C."/>
            <person name="Fine L.D."/>
            <person name="Fritchman J.L."/>
            <person name="Fuhrmann J.L."/>
            <person name="Geoghagen N.S.M."/>
            <person name="Gnehm C.L."/>
            <person name="McDonald L.A."/>
            <person name="Small K.V."/>
            <person name="Fraser C.M."/>
            <person name="Smith H.O."/>
            <person name="Venter J.C."/>
        </authorList>
    </citation>
    <scope>NUCLEOTIDE SEQUENCE [LARGE SCALE GENOMIC DNA]</scope>
    <source>
        <strain>ATCC 51907 / DSM 11121 / KW20 / Rd</strain>
    </source>
</reference>
<reference key="2">
    <citation type="journal article" date="2001" name="Biochemistry">
        <title>Solution structure of HI0257, a bacterial ribosome binding protein.</title>
        <authorList>
            <person name="Parsons L."/>
            <person name="Eisenstein E."/>
            <person name="Orban J."/>
        </authorList>
    </citation>
    <scope>STRUCTURE BY NMR</scope>
    <scope>MASS SPECTROMETRY</scope>
</reference>
<comment type="function">
    <text evidence="2">During stationary phase, prevents 70S dimer formation, probably in order to regulate translation efficiency during transition between the exponential and the stationary phases. In addition, during environmental stress such as cold shock or excessive cell density at stationary phase, stabilizes the 70S ribosome against dissociation, inhibits translation initiation and increase translation accuracy. When normal growth conditions are restored, is quickly released from the ribosome (By similarity).</text>
</comment>
<comment type="subunit">
    <text evidence="2">Associates mainly with 70S ribosomes.</text>
</comment>
<comment type="induction">
    <text evidence="2">By environmental stress and during stationary phase.</text>
</comment>
<comment type="mass spectrometry"/>
<comment type="similarity">
    <text evidence="5">Belongs to the HPF/YfiA ribosome-associated protein family. YfiA subfamily.</text>
</comment>
<sequence>MTLNITSKQMDITPAIREHLEERLAKLGKWQTQLISPHFVLNKVPNGFSVEASIGTPLGNLLASATSDDMYKAINEVEEKLERQLNKLQHKSESRRADERLKDSFEN</sequence>
<evidence type="ECO:0000250" key="1"/>
<evidence type="ECO:0000250" key="2">
    <source>
        <dbReference type="UniProtKB" id="P0AD49"/>
    </source>
</evidence>
<evidence type="ECO:0000256" key="3">
    <source>
        <dbReference type="SAM" id="MobiDB-lite"/>
    </source>
</evidence>
<evidence type="ECO:0000269" key="4">
    <source>
    </source>
</evidence>
<evidence type="ECO:0000305" key="5"/>
<evidence type="ECO:0007829" key="6">
    <source>
        <dbReference type="PDB" id="1IMU"/>
    </source>
</evidence>
<proteinExistence type="evidence at protein level"/>
<protein>
    <recommendedName>
        <fullName evidence="5">Ribosome-associated factor Y</fullName>
        <shortName>pY</shortName>
    </recommendedName>
    <alternativeName>
        <fullName>Ribosome associated inhibitor A</fullName>
    </alternativeName>
</protein>
<gene>
    <name evidence="5" type="primary">yfiA</name>
    <name type="synonym">raiA</name>
    <name type="ordered locus">HI_0257</name>
</gene>
<accession>P71346</accession>
<keyword id="KW-0002">3D-structure</keyword>
<keyword id="KW-1185">Reference proteome</keyword>
<keyword id="KW-0346">Stress response</keyword>
<keyword id="KW-0810">Translation regulation</keyword>
<dbReference type="EMBL" id="L42023">
    <property type="protein sequence ID" value="AAC21923.1"/>
    <property type="molecule type" value="Genomic_DNA"/>
</dbReference>
<dbReference type="RefSeq" id="NP_438426.1">
    <property type="nucleotide sequence ID" value="NC_000907.1"/>
</dbReference>
<dbReference type="PDB" id="1IMU">
    <property type="method" value="NMR"/>
    <property type="chains" value="A=1-107"/>
</dbReference>
<dbReference type="PDBsum" id="1IMU"/>
<dbReference type="BMRB" id="P71346"/>
<dbReference type="SMR" id="P71346"/>
<dbReference type="STRING" id="71421.HI_0257"/>
<dbReference type="EnsemblBacteria" id="AAC21923">
    <property type="protein sequence ID" value="AAC21923"/>
    <property type="gene ID" value="HI_0257"/>
</dbReference>
<dbReference type="KEGG" id="hin:HI_0257"/>
<dbReference type="PATRIC" id="fig|71421.8.peg.272"/>
<dbReference type="eggNOG" id="COG1544">
    <property type="taxonomic scope" value="Bacteria"/>
</dbReference>
<dbReference type="HOGENOM" id="CLU_071472_3_0_6"/>
<dbReference type="OrthoDB" id="9795980at2"/>
<dbReference type="PhylomeDB" id="P71346"/>
<dbReference type="BioCyc" id="HINF71421:G1GJ1-271-MONOMER"/>
<dbReference type="EvolutionaryTrace" id="P71346"/>
<dbReference type="Proteomes" id="UP000000579">
    <property type="component" value="Chromosome"/>
</dbReference>
<dbReference type="GO" id="GO:0022627">
    <property type="term" value="C:cytosolic small ribosomal subunit"/>
    <property type="evidence" value="ECO:0000318"/>
    <property type="project" value="GO_Central"/>
</dbReference>
<dbReference type="GO" id="GO:0043024">
    <property type="term" value="F:ribosomal small subunit binding"/>
    <property type="evidence" value="ECO:0000318"/>
    <property type="project" value="GO_Central"/>
</dbReference>
<dbReference type="GO" id="GO:0045900">
    <property type="term" value="P:negative regulation of translational elongation"/>
    <property type="evidence" value="ECO:0000318"/>
    <property type="project" value="GO_Central"/>
</dbReference>
<dbReference type="CDD" id="cd00552">
    <property type="entry name" value="RaiA"/>
    <property type="match status" value="1"/>
</dbReference>
<dbReference type="FunFam" id="3.30.160.100:FF:000002">
    <property type="entry name" value="Ribosome-associated translation inhibitor RaiA"/>
    <property type="match status" value="1"/>
</dbReference>
<dbReference type="Gene3D" id="3.30.160.100">
    <property type="entry name" value="Ribosome hibernation promotion factor-like"/>
    <property type="match status" value="1"/>
</dbReference>
<dbReference type="InterPro" id="IPR050574">
    <property type="entry name" value="HPF/YfiA_ribosome-assoc"/>
</dbReference>
<dbReference type="InterPro" id="IPR036567">
    <property type="entry name" value="RHF-like"/>
</dbReference>
<dbReference type="InterPro" id="IPR003489">
    <property type="entry name" value="RHF/RaiA"/>
</dbReference>
<dbReference type="NCBIfam" id="TIGR00741">
    <property type="entry name" value="yfiA"/>
    <property type="match status" value="1"/>
</dbReference>
<dbReference type="PANTHER" id="PTHR33231">
    <property type="entry name" value="30S RIBOSOMAL PROTEIN"/>
    <property type="match status" value="1"/>
</dbReference>
<dbReference type="PANTHER" id="PTHR33231:SF3">
    <property type="entry name" value="RIBOSOME-ASSOCIATED INHIBITOR A"/>
    <property type="match status" value="1"/>
</dbReference>
<dbReference type="Pfam" id="PF02482">
    <property type="entry name" value="Ribosomal_S30AE"/>
    <property type="match status" value="1"/>
</dbReference>
<dbReference type="SUPFAM" id="SSF69754">
    <property type="entry name" value="Ribosome binding protein Y (YfiA homologue)"/>
    <property type="match status" value="1"/>
</dbReference>
<organism>
    <name type="scientific">Haemophilus influenzae (strain ATCC 51907 / DSM 11121 / KW20 / Rd)</name>
    <dbReference type="NCBI Taxonomy" id="71421"/>
    <lineage>
        <taxon>Bacteria</taxon>
        <taxon>Pseudomonadati</taxon>
        <taxon>Pseudomonadota</taxon>
        <taxon>Gammaproteobacteria</taxon>
        <taxon>Pasteurellales</taxon>
        <taxon>Pasteurellaceae</taxon>
        <taxon>Haemophilus</taxon>
    </lineage>
</organism>
<feature type="initiator methionine" description="Removed" evidence="1">
    <location>
        <position position="1"/>
    </location>
</feature>
<feature type="chain" id="PRO_0000169265" description="Ribosome-associated factor Y">
    <location>
        <begin position="2"/>
        <end position="107"/>
    </location>
</feature>
<feature type="region of interest" description="Disordered" evidence="3">
    <location>
        <begin position="85"/>
        <end position="107"/>
    </location>
</feature>
<feature type="strand" evidence="6">
    <location>
        <begin position="8"/>
        <end position="10"/>
    </location>
</feature>
<feature type="helix" evidence="6">
    <location>
        <begin position="14"/>
        <end position="28"/>
    </location>
</feature>
<feature type="strand" evidence="6">
    <location>
        <begin position="38"/>
        <end position="44"/>
    </location>
</feature>
<feature type="strand" evidence="6">
    <location>
        <begin position="47"/>
        <end position="54"/>
    </location>
</feature>
<feature type="strand" evidence="6">
    <location>
        <begin position="61"/>
        <end position="68"/>
    </location>
</feature>
<feature type="helix" evidence="6">
    <location>
        <begin position="70"/>
        <end position="90"/>
    </location>
</feature>